<sequence>NPMYNVVSNADLVDFKNLLDHLEEKMPLEDEVVLPQVASEQNEEAGAVLSALPEVPSWPGEAGPAQREGGALGRGPWDSSDRSAPLKSKLRALLDAPRSLRRSSCFGGRMDRIGAQSSLGCNSFRYRR</sequence>
<proteinExistence type="evidence at transcript level"/>
<organism>
    <name type="scientific">Cavia porcellus</name>
    <name type="common">Guinea pig</name>
    <dbReference type="NCBI Taxonomy" id="10141"/>
    <lineage>
        <taxon>Eukaryota</taxon>
        <taxon>Metazoa</taxon>
        <taxon>Chordata</taxon>
        <taxon>Craniata</taxon>
        <taxon>Vertebrata</taxon>
        <taxon>Euteleostomi</taxon>
        <taxon>Mammalia</taxon>
        <taxon>Eutheria</taxon>
        <taxon>Euarchontoglires</taxon>
        <taxon>Glires</taxon>
        <taxon>Rodentia</taxon>
        <taxon>Hystricomorpha</taxon>
        <taxon>Caviidae</taxon>
        <taxon>Cavia</taxon>
    </lineage>
</organism>
<feature type="chain" id="PRO_0000451942" description="Natriuretic peptides A">
    <location>
        <begin position="1"/>
        <end position="128"/>
    </location>
</feature>
<feature type="peptide" id="PRO_0000001486" description="Long-acting natriuretic peptide" evidence="1">
    <location>
        <begin position="1"/>
        <end position="30"/>
    </location>
</feature>
<feature type="peptide" id="PRO_0000451943" description="Vessel dilator" evidence="1">
    <location>
        <begin position="31"/>
        <end position="67"/>
    </location>
</feature>
<feature type="propeptide" id="PRO_0000451944" evidence="1">
    <location>
        <begin position="68"/>
        <end position="78"/>
    </location>
</feature>
<feature type="peptide" id="PRO_0000451945" description="Kaliuretic peptide" evidence="1">
    <location>
        <begin position="79"/>
        <end position="98"/>
    </location>
</feature>
<feature type="peptide" id="PRO_0000451946" description="Auriculin-C" evidence="2">
    <location>
        <begin position="94"/>
        <end position="126"/>
    </location>
</feature>
<feature type="peptide" id="PRO_0000451947" description="Urodilatin" evidence="1">
    <location>
        <begin position="95"/>
        <end position="126"/>
    </location>
</feature>
<feature type="peptide" id="PRO_0000451948" description="Auriculin-D" evidence="2">
    <location>
        <begin position="96"/>
        <end position="120"/>
    </location>
</feature>
<feature type="peptide" id="PRO_0000001487" description="Atrial natriuretic peptide" evidence="1">
    <location>
        <begin position="99"/>
        <end position="126"/>
    </location>
</feature>
<feature type="peptide" id="PRO_0000451949" description="Auriculin-B" evidence="2">
    <location>
        <begin position="102"/>
        <end position="126"/>
    </location>
</feature>
<feature type="peptide" id="PRO_0000451950" description="Auriculin-A" evidence="2">
    <location>
        <begin position="102"/>
        <end position="125"/>
    </location>
</feature>
<feature type="peptide" id="PRO_0000451951" description="Atriopeptin-3" evidence="2">
    <location>
        <begin position="103"/>
        <end position="126"/>
    </location>
</feature>
<feature type="peptide" id="PRO_0000451952" description="Atriopeptin-2" evidence="2">
    <location>
        <begin position="103"/>
        <end position="125"/>
    </location>
</feature>
<feature type="peptide" id="PRO_0000451953" description="Atriopeptin-1" evidence="2">
    <location>
        <begin position="103"/>
        <end position="123"/>
    </location>
</feature>
<feature type="region of interest" description="Disordered" evidence="4">
    <location>
        <begin position="36"/>
        <end position="84"/>
    </location>
</feature>
<feature type="region of interest" description="Important for degradation of atrial natriuretic peptide by IDE" evidence="1">
    <location>
        <begin position="122"/>
        <end position="126"/>
    </location>
</feature>
<feature type="site" description="Cleavage; by CORIN" evidence="1">
    <location>
        <begin position="98"/>
        <end position="99"/>
    </location>
</feature>
<feature type="site" description="Cleavage; by MME" evidence="1">
    <location>
        <begin position="105"/>
        <end position="106"/>
    </location>
</feature>
<feature type="modified residue" description="Phosphoserine" evidence="1">
    <location>
        <position position="104"/>
    </location>
</feature>
<feature type="disulfide bond" evidence="1">
    <location>
        <begin position="105"/>
        <end position="121"/>
    </location>
</feature>
<feature type="non-terminal residue">
    <location>
        <position position="1"/>
    </location>
</feature>
<protein>
    <recommendedName>
        <fullName evidence="5">Natriuretic peptides A</fullName>
    </recommendedName>
    <alternativeName>
        <fullName evidence="1">Atrial natriuretic factor prohormone</fullName>
        <shortName evidence="2">preproANF</shortName>
        <shortName evidence="1">proANF</shortName>
    </alternativeName>
    <alternativeName>
        <fullName evidence="1">Atrial natriuretic peptide prohormone</fullName>
        <shortName evidence="1">preproANP</shortName>
        <shortName evidence="1">proANP</shortName>
    </alternativeName>
    <alternativeName>
        <fullName evidence="2">Atriopeptigen</fullName>
    </alternativeName>
    <alternativeName>
        <fullName evidence="1">Cardiodilatin</fullName>
        <shortName evidence="1">CDD</shortName>
    </alternativeName>
    <alternativeName>
        <fullName evidence="1">preproCDD-ANF</fullName>
    </alternativeName>
    <component>
        <recommendedName>
            <fullName evidence="1">Long-acting natriuretic peptide</fullName>
            <shortName evidence="1">LANP</shortName>
        </recommendedName>
        <alternativeName>
            <fullName evidence="5">Long-acting natriuretic hormone</fullName>
            <shortName evidence="5">LANH</shortName>
        </alternativeName>
        <alternativeName>
            <fullName evidence="1">Pro atrial natriuretic factor 1-30</fullName>
            <shortName evidence="1">proANF 1-30</shortName>
        </alternativeName>
        <alternativeName>
            <fullName evidence="5">Pro atrial natriuretic peptide 1-30</fullName>
            <shortName evidence="5">proANP 1-30</shortName>
        </alternativeName>
    </component>
    <component>
        <recommendedName>
            <fullName evidence="1">Vessel dilator</fullName>
            <shortName evidence="1">VSDL</shortName>
        </recommendedName>
        <alternativeName>
            <fullName evidence="1">Pro atrial natriuretic factor 31-67</fullName>
            <shortName evidence="1">proANF 31-67</shortName>
        </alternativeName>
        <alternativeName>
            <fullName evidence="5">Pro atrial natriuretic peptide 31-67</fullName>
            <shortName evidence="5">proANP 31-67</shortName>
        </alternativeName>
    </component>
    <component>
        <recommendedName>
            <fullName evidence="1">Kaliuretic peptide</fullName>
            <shortName evidence="1">KP</shortName>
        </recommendedName>
        <alternativeName>
            <fullName evidence="1">Pro atrial natriuretic factor 79-98</fullName>
            <shortName evidence="1">proANF 79-98</shortName>
        </alternativeName>
        <alternativeName>
            <fullName evidence="5">Pro atrial natriuretic peptide 79-98</fullName>
            <shortName evidence="5">proANP 79-98</shortName>
        </alternativeName>
    </component>
    <component>
        <recommendedName>
            <fullName evidence="1">Urodilatin</fullName>
            <shortName evidence="1">URO</shortName>
        </recommendedName>
        <alternativeName>
            <fullName evidence="1">CDD 95-126</fullName>
        </alternativeName>
        <alternativeName>
            <fullName evidence="1">CDD-ANP (95-126)</fullName>
        </alternativeName>
        <alternativeName>
            <fullName evidence="1">Pro atrial natriuretic peptide 95-126</fullName>
            <shortName evidence="1">proANP 95-126</shortName>
        </alternativeName>
    </component>
    <component>
        <recommendedName>
            <fullName evidence="5">Auriculin-C</fullName>
        </recommendedName>
        <alternativeName>
            <fullName evidence="2">Atrial natriuretic factor 1-33</fullName>
            <shortName evidence="2">ANF 1-33</shortName>
        </alternativeName>
    </component>
    <component>
        <recommendedName>
            <fullName evidence="5">Auriculin-D</fullName>
        </recommendedName>
        <alternativeName>
            <fullName evidence="2">Atrial natriuretic factor 3-33</fullName>
            <shortName evidence="2">ANF 3-33</shortName>
        </alternativeName>
    </component>
    <component>
        <recommendedName>
            <fullName evidence="1">Atrial natriuretic peptide</fullName>
            <shortName evidence="1">ANP</shortName>
        </recommendedName>
        <alternativeName>
            <fullName evidence="1">Alpha-atrial natriuretic peptide</fullName>
        </alternativeName>
        <alternativeName>
            <fullName evidence="1">Alpha-hANP</fullName>
        </alternativeName>
        <alternativeName>
            <fullName evidence="1">Atrial natriuretic factor</fullName>
            <shortName evidence="1">ANF</shortName>
        </alternativeName>
        <alternativeName>
            <fullName evidence="1">CDD-ANF</fullName>
        </alternativeName>
        <alternativeName>
            <fullName evidence="1">CDD-ANP (99-126)</fullName>
        </alternativeName>
        <alternativeName>
            <fullName evidence="2">Cardionatrin</fullName>
        </alternativeName>
        <alternativeName>
            <fullName evidence="1">Pro atrial natriuretic factor 99-126</fullName>
            <shortName evidence="1">proANF 99-126</shortName>
        </alternativeName>
    </component>
    <component>
        <recommendedName>
            <fullName evidence="5">Auriculin-B</fullName>
        </recommendedName>
        <alternativeName>
            <fullName evidence="2">Atrial natriuretic factor 8-33</fullName>
            <shortName evidence="2">ANF 8-33</shortName>
        </alternativeName>
    </component>
    <component>
        <recommendedName>
            <fullName evidence="2">Auriculin-A</fullName>
        </recommendedName>
    </component>
    <component>
        <recommendedName>
            <fullName evidence="2">Atriopeptin-1</fullName>
        </recommendedName>
        <alternativeName>
            <fullName evidence="2">Atriopeptin I</fullName>
        </alternativeName>
    </component>
    <component>
        <recommendedName>
            <fullName evidence="2">Atriopeptin-2</fullName>
        </recommendedName>
        <alternativeName>
            <fullName evidence="2">Atriopeptin II</fullName>
        </alternativeName>
    </component>
    <component>
        <recommendedName>
            <fullName evidence="2">Atriopeptin-3</fullName>
        </recommendedName>
        <alternativeName>
            <fullName evidence="2">Atriopeptin III</fullName>
        </alternativeName>
    </component>
</protein>
<keyword id="KW-0966">Cell projection</keyword>
<keyword id="KW-1015">Disulfide bond</keyword>
<keyword id="KW-0372">Hormone</keyword>
<keyword id="KW-0597">Phosphoprotein</keyword>
<keyword id="KW-1185">Reference proteome</keyword>
<keyword id="KW-0964">Secreted</keyword>
<keyword id="KW-0838">Vasoactive</keyword>
<gene>
    <name type="primary">NPPA</name>
</gene>
<name>ANF_CAVPO</name>
<accession>P27596</accession>
<reference key="1">
    <citation type="submission" date="1991-03" db="EMBL/GenBank/DDBJ databases">
        <authorList>
            <person name="Maegert H.-J."/>
            <person name="Hanke M."/>
            <person name="Schmeding G."/>
            <person name="Teuteberg K."/>
            <person name="Schulz-Knappe P."/>
            <person name="Forssmann W.-G."/>
        </authorList>
    </citation>
    <scope>NUCLEOTIDE SEQUENCE [MRNA]</scope>
    <source>
        <tissue>Heart atrium</tissue>
    </source>
</reference>
<comment type="function">
    <molecule>Atrial natriuretic peptide</molecule>
    <text evidence="1 3">Hormone that plays a key role in mediating cardio-renal homeostasis, and is involved in vascular remodeling and regulating energy metabolism. Acts by specifically binding and stimulating NPR1 to produce cGMP, which in turn activates effector proteins, such as PRKG1, that drive various biological responses. Regulates vasodilation, natriuresis, diuresis and aldosterone synthesis and is therefore essential for regulating blood pressure, controlling the extracellular fluid volume and maintaining the fluid-electrolyte balance. Also involved in inhibiting cardiac remodeling and cardiac hypertrophy by inducing cardiomyocyte apoptosis and attenuating the growth of cardiomyocytes and fibroblasts (By similarity). Plays a role in female pregnancy by promoting trophoblast invasion and spiral artery remodeling in uterus, and thus prevents pregnancy-induced hypertension (By similarity). In adipose tissue, acts in various cGMP- and PKG-dependent pathways to regulate lipid metabolism and energy homeostasis. This includes up-regulating lipid metabolism and mitochondrial oxygen utilization by activating the AMP-activated protein kinase (AMPK), and increasing energy expenditure by acting via MAPK11 to promote the UCP1-dependent thermogenesis of brown adipose tissue. Binds the clearance receptor NPR3 which removes the hormone from circulation (By similarity).</text>
</comment>
<comment type="function">
    <molecule>Long-acting natriuretic peptide</molecule>
    <text evidence="1 2">May have a role in cardio-renal homeostasis through regulation of natriuresis, diuresis, vasodilation, and inhibiting aldosterone synthesis. In vitro, promotes the production of cGMP and induces vasodilation. May promote natriuresis, at least in part, by enhancing prostaglandin E2 synthesis resulting in the inhibition of renal Na+-K+-ATPase (By similarity). However reports on the involvement of this peptide in mammal blood volume and blood pressure homeostasis are conflicting; according to a report, in vivo it is not sufficient to activate cGMP and does not inhibit collecting duct transport nor effect diuresis and natriuresis (By similarity). Appears to bind to specific receptors that are distinct from the receptors bound by atrial natriuretic peptide and vessel dilator. Possibly enhances protein excretion in urine by decreasing proximal tubular protein reabsorption (By similarity).</text>
</comment>
<comment type="function">
    <molecule>Vessel dilator</molecule>
    <text evidence="1">May have a role in cardio-renal homeostasis through regulation of natriuresis, diuresis, and vasodilation. In vitro, promotes the production of cGMP and induces vasodilation. May promote natriuresis, at least in part, by enhancing prostaglandin E2 synthesis resulting in the inhibition of renal Na+-K+-ATPase. However reports on the involvement of this peptide in mammal blood volume and blood pressure homeostasis are conflicting; according to a report it is not sufficient to activate cGMP and does not inhibit collecting duct transport nor effect diuresis and natriuresis. Appears to bind to specific receptors that are distinct from the receptors bound by the atrial natriuretic and long-acting natriuretic peptides. Possibly functions in protein excretion in urine by maintaining the integrity of the proximal tubules and enhancing protein excretion by decreasing proximal tubular protein reabsorption.</text>
</comment>
<comment type="function">
    <molecule>Kaliuretic peptide</molecule>
    <text evidence="1">May have a role in cardio-renal homeostasis through regulation of diuresis and inhibiting aldosterone synthesis. In vitro, promotes the production of cGMP and induces vasodilation. May promote natriuresis, at least in part, by enhancing prostaglandin E2 synthesis resulting in the inhibition of renal Na+-K+-ATPase. May have a role in potassium excretion but not sodium excretion (natriuresis). Possibly enhances protein excretion in urine by decreasing proximal tubular protein reabsorption.</text>
</comment>
<comment type="function">
    <molecule>Urodilatin</molecule>
    <text evidence="1">Hormone produced in the kidneys that appears to be important for maintaining cardio-renal homeostasis. Mediates vasodilation, natriuresis and diuresis primarily in the renal system, in order to maintain the extracellular fluid volume and control the fluid-electrolyte balance. Specifically binds and stimulates cGMP production by renal transmembrane receptors, likely NPR1. Urodilatin not ANP, may be the natriuretic peptide responsible for the regulation of sodium and water homeostasis in the kidney.</text>
</comment>
<comment type="function">
    <molecule>Auriculin-D</molecule>
    <text evidence="2">May have a role in cardio-renal homeostasis through regulation of natriuresis and vasodilation. In vivo promotes natriuresis and in vitro, vasodilates renal artery strips.</text>
</comment>
<comment type="function">
    <molecule>Auriculin-B</molecule>
    <text evidence="2">May have a role in cardio-renal homeostasis through regulation of natriuresis and vasodilation. In vivo promotes natriuresis and in vitro, vasodilates renal artery strips.</text>
</comment>
<comment type="function">
    <molecule>Auriculin-A</molecule>
    <text evidence="2">May have a role in cardio-renal homeostasis through regulation of regulation of natriuresis and vasodilation. In vivo promotes natriuresis. In vitro, vasodilates intestinal smooth muscle but not smooth muscle strips.</text>
</comment>
<comment type="function">
    <molecule>Atriopeptin-2</molecule>
    <text evidence="2">May have a role in cardio-renal homeostasis through regulation of natriuresis and vasodilation. In vivo promotes natriuresis. In vitro, selectively vasodilates intestinal and vascular smooth muscle strips.</text>
</comment>
<comment type="function">
    <molecule>Atriopeptin-1</molecule>
    <text evidence="2">May have a role in cardio-renal homeostasis through regulation of natriuresis and vasodilation. In vivo promotes natriuresis. In vitro, selectively vasodilates intestinal smooth muscle but not vascular smooth muscle strips.</text>
</comment>
<comment type="subunit">
    <molecule>Atrial natriuretic peptide</molecule>
    <text evidence="1">Homodimer; disulfide-linked antiparallel dimer.</text>
</comment>
<comment type="subcellular location">
    <molecule>Long-acting natriuretic peptide</molecule>
    <subcellularLocation>
        <location evidence="1">Secreted</location>
    </subcellularLocation>
    <text evidence="1">Detected in blood.</text>
</comment>
<comment type="subcellular location">
    <molecule>Vessel dilator</molecule>
    <subcellularLocation>
        <location evidence="1">Secreted</location>
    </subcellularLocation>
    <text evidence="1">Detected in blood.</text>
</comment>
<comment type="subcellular location">
    <molecule>Kaliuretic peptide</molecule>
    <subcellularLocation>
        <location evidence="1">Secreted</location>
    </subcellularLocation>
    <text evidence="1">Detected in blood.</text>
</comment>
<comment type="subcellular location">
    <molecule>Urodilatin</molecule>
    <subcellularLocation>
        <location evidence="1">Secreted</location>
    </subcellularLocation>
    <text evidence="1">Detected in urine. Not detected in blood. Increased electrolytes, osmolality and intracellular cAMP levels increase peptide secretion/excretion.</text>
</comment>
<comment type="subcellular location">
    <molecule>Atrial natriuretic peptide</molecule>
    <subcellularLocation>
        <location evidence="1">Secreted</location>
    </subcellularLocation>
    <subcellularLocation>
        <location evidence="1">Perikaryon</location>
    </subcellularLocation>
    <subcellularLocation>
        <location evidence="1">Cell projection</location>
    </subcellularLocation>
    <text evidence="1 2">Detected in blood. Detected in urine in one study. However, in another study, was not detected in urine. Detected in cytoplasmic bodies and neuronal processes of pyramidal neurons (layers II-VI) (By similarity). Increased secretion in response to the vasopressin AVP (By similarity). Likely to be secreted in response to an increase in atrial pressure or atrial stretch. In kidney cells, secretion increases in response to activated guanylyl cyclases and increased intracellular cAMP levels. Plasma levels increase 15 minutes after a high-salt meal, and decrease back to normal plasma levels 1 hr later (By similarity).</text>
</comment>
<comment type="subcellular location">
    <molecule>Atriopeptin-3</molecule>
    <subcellularLocation>
        <location evidence="2">Secreted</location>
    </subcellularLocation>
    <text evidence="2">Detected in blood. Slight increase in secretion in response to the vasopressin AVP.</text>
</comment>
<comment type="developmental stage">
    <text>Adult.</text>
</comment>
<comment type="PTM">
    <text evidence="1 2">The precursor molecule is proteolytically cleaved by CORIN at Arg-98 to produce atrial natriuretic peptide. Undergoes further proteolytic cleavage by unknown proteases to give rise to long-acting natriuretic peptide, vessel dilator and kaliuretic peptide (By similarity). Additional processing gives rise to the auriculin and atriopeptin peptides (By similarity). In the kidneys, alternative processing by an unknown protease results in the peptide urodilatin (By similarity).</text>
</comment>
<comment type="PTM">
    <molecule>Atrial natriuretic peptide</molecule>
    <text evidence="1">Cleavage by MME initiates degradation of the factor and thereby regulates its activity. Degraded by IDE (in vitro). During IDE degradation, the resulting products can temporarily stimulate NPR2 to produce cGMP, before the fragments are completely degraded and inactivated by IDE (in vitro).</text>
</comment>
<comment type="PTM">
    <molecule>Urodilatin</molecule>
    <text evidence="1">Degraded by IDE.</text>
</comment>
<comment type="PTM">
    <molecule>Urodilatin</molecule>
    <text evidence="1">Phosphorylation on Ser-104 decreases vasorelaxant activity.</text>
</comment>
<comment type="similarity">
    <text evidence="5">Belongs to the natriuretic peptide family.</text>
</comment>
<evidence type="ECO:0000250" key="1">
    <source>
        <dbReference type="UniProtKB" id="P01160"/>
    </source>
</evidence>
<evidence type="ECO:0000250" key="2">
    <source>
        <dbReference type="UniProtKB" id="P01161"/>
    </source>
</evidence>
<evidence type="ECO:0000250" key="3">
    <source>
        <dbReference type="UniProtKB" id="P05125"/>
    </source>
</evidence>
<evidence type="ECO:0000256" key="4">
    <source>
        <dbReference type="SAM" id="MobiDB-lite"/>
    </source>
</evidence>
<evidence type="ECO:0000305" key="5"/>
<dbReference type="EMBL" id="X58562">
    <property type="protein sequence ID" value="CAA41442.1"/>
    <property type="molecule type" value="mRNA"/>
</dbReference>
<dbReference type="PIR" id="S14872">
    <property type="entry name" value="S14872"/>
</dbReference>
<dbReference type="FunCoup" id="P27596">
    <property type="interactions" value="459"/>
</dbReference>
<dbReference type="STRING" id="10141.ENSCPOP00000015551"/>
<dbReference type="ChEMBL" id="CHEMBL3097985"/>
<dbReference type="eggNOG" id="ENOG502S9RQ">
    <property type="taxonomic scope" value="Eukaryota"/>
</dbReference>
<dbReference type="InParanoid" id="P27596"/>
<dbReference type="Proteomes" id="UP000005447">
    <property type="component" value="Unassembled WGS sequence"/>
</dbReference>
<dbReference type="GO" id="GO:0042995">
    <property type="term" value="C:cell projection"/>
    <property type="evidence" value="ECO:0007669"/>
    <property type="project" value="UniProtKB-SubCell"/>
</dbReference>
<dbReference type="GO" id="GO:0005737">
    <property type="term" value="C:cytoplasm"/>
    <property type="evidence" value="ECO:0007669"/>
    <property type="project" value="TreeGrafter"/>
</dbReference>
<dbReference type="GO" id="GO:0005615">
    <property type="term" value="C:extracellular space"/>
    <property type="evidence" value="ECO:0007669"/>
    <property type="project" value="TreeGrafter"/>
</dbReference>
<dbReference type="GO" id="GO:0043204">
    <property type="term" value="C:perikaryon"/>
    <property type="evidence" value="ECO:0007669"/>
    <property type="project" value="UniProtKB-SubCell"/>
</dbReference>
<dbReference type="GO" id="GO:0005179">
    <property type="term" value="F:hormone activity"/>
    <property type="evidence" value="ECO:0007669"/>
    <property type="project" value="UniProtKB-KW"/>
</dbReference>
<dbReference type="GO" id="GO:0051427">
    <property type="term" value="F:hormone receptor binding"/>
    <property type="evidence" value="ECO:0007669"/>
    <property type="project" value="TreeGrafter"/>
</dbReference>
<dbReference type="GO" id="GO:0097746">
    <property type="term" value="P:blood vessel diameter maintenance"/>
    <property type="evidence" value="ECO:0007669"/>
    <property type="project" value="UniProtKB-KW"/>
</dbReference>
<dbReference type="GO" id="GO:0006182">
    <property type="term" value="P:cGMP biosynthetic process"/>
    <property type="evidence" value="ECO:0000250"/>
    <property type="project" value="UniProtKB"/>
</dbReference>
<dbReference type="GO" id="GO:0019934">
    <property type="term" value="P:cGMP-mediated signaling"/>
    <property type="evidence" value="ECO:0007669"/>
    <property type="project" value="TreeGrafter"/>
</dbReference>
<dbReference type="GO" id="GO:0007565">
    <property type="term" value="P:female pregnancy"/>
    <property type="evidence" value="ECO:0000250"/>
    <property type="project" value="UniProtKB"/>
</dbReference>
<dbReference type="GO" id="GO:0003085">
    <property type="term" value="P:negative regulation of systemic arterial blood pressure"/>
    <property type="evidence" value="ECO:0007669"/>
    <property type="project" value="TreeGrafter"/>
</dbReference>
<dbReference type="GO" id="GO:0007218">
    <property type="term" value="P:neuropeptide signaling pathway"/>
    <property type="evidence" value="ECO:0007669"/>
    <property type="project" value="TreeGrafter"/>
</dbReference>
<dbReference type="GO" id="GO:0007168">
    <property type="term" value="P:receptor guanylyl cyclase signaling pathway"/>
    <property type="evidence" value="ECO:0000250"/>
    <property type="project" value="UniProtKB"/>
</dbReference>
<dbReference type="GO" id="GO:0008217">
    <property type="term" value="P:regulation of blood pressure"/>
    <property type="evidence" value="ECO:0000250"/>
    <property type="project" value="UniProtKB"/>
</dbReference>
<dbReference type="InterPro" id="IPR000663">
    <property type="entry name" value="Natr_peptide"/>
</dbReference>
<dbReference type="InterPro" id="IPR030480">
    <property type="entry name" value="Natr_peptide_CS"/>
</dbReference>
<dbReference type="InterPro" id="IPR050787">
    <property type="entry name" value="Natriuretic_peptide"/>
</dbReference>
<dbReference type="InterPro" id="IPR002407">
    <property type="entry name" value="Natriuretic_peptide_atrial"/>
</dbReference>
<dbReference type="PANTHER" id="PTHR14066">
    <property type="entry name" value="ATRIAL NATRIURETIC FACTOR PRECURSOR"/>
    <property type="match status" value="1"/>
</dbReference>
<dbReference type="PANTHER" id="PTHR14066:SF2">
    <property type="entry name" value="NATRIURETIC PEPTIDES A"/>
    <property type="match status" value="1"/>
</dbReference>
<dbReference type="Pfam" id="PF00212">
    <property type="entry name" value="ANP"/>
    <property type="match status" value="1"/>
</dbReference>
<dbReference type="PRINTS" id="PR00711">
    <property type="entry name" value="ANATPEPTIDE"/>
</dbReference>
<dbReference type="SMART" id="SM00183">
    <property type="entry name" value="NAT_PEP"/>
    <property type="match status" value="1"/>
</dbReference>
<dbReference type="PROSITE" id="PS00263">
    <property type="entry name" value="NATRIURETIC_PEPTIDE"/>
    <property type="match status" value="1"/>
</dbReference>